<dbReference type="EC" id="4.4.1.21" evidence="1"/>
<dbReference type="EMBL" id="CP000903">
    <property type="protein sequence ID" value="ABY45780.1"/>
    <property type="molecule type" value="Genomic_DNA"/>
</dbReference>
<dbReference type="RefSeq" id="WP_001141371.1">
    <property type="nucleotide sequence ID" value="NZ_CAKMRX030000118.1"/>
</dbReference>
<dbReference type="SMR" id="A9VLF6"/>
<dbReference type="GeneID" id="92884602"/>
<dbReference type="KEGG" id="bwe:BcerKBAB4_4626"/>
<dbReference type="eggNOG" id="COG1854">
    <property type="taxonomic scope" value="Bacteria"/>
</dbReference>
<dbReference type="HOGENOM" id="CLU_107531_2_0_9"/>
<dbReference type="Proteomes" id="UP000002154">
    <property type="component" value="Chromosome"/>
</dbReference>
<dbReference type="GO" id="GO:0005506">
    <property type="term" value="F:iron ion binding"/>
    <property type="evidence" value="ECO:0007669"/>
    <property type="project" value="InterPro"/>
</dbReference>
<dbReference type="GO" id="GO:0043768">
    <property type="term" value="F:S-ribosylhomocysteine lyase activity"/>
    <property type="evidence" value="ECO:0007669"/>
    <property type="project" value="UniProtKB-UniRule"/>
</dbReference>
<dbReference type="GO" id="GO:0009372">
    <property type="term" value="P:quorum sensing"/>
    <property type="evidence" value="ECO:0007669"/>
    <property type="project" value="UniProtKB-UniRule"/>
</dbReference>
<dbReference type="Gene3D" id="3.30.1360.80">
    <property type="entry name" value="S-ribosylhomocysteinase (LuxS)"/>
    <property type="match status" value="1"/>
</dbReference>
<dbReference type="HAMAP" id="MF_00091">
    <property type="entry name" value="LuxS"/>
    <property type="match status" value="1"/>
</dbReference>
<dbReference type="InterPro" id="IPR037005">
    <property type="entry name" value="LuxS_sf"/>
</dbReference>
<dbReference type="InterPro" id="IPR011249">
    <property type="entry name" value="Metalloenz_LuxS/M16"/>
</dbReference>
<dbReference type="InterPro" id="IPR003815">
    <property type="entry name" value="S-ribosylhomocysteinase"/>
</dbReference>
<dbReference type="NCBIfam" id="NF002603">
    <property type="entry name" value="PRK02260.1-3"/>
    <property type="match status" value="1"/>
</dbReference>
<dbReference type="PANTHER" id="PTHR35799">
    <property type="entry name" value="S-RIBOSYLHOMOCYSTEINE LYASE"/>
    <property type="match status" value="1"/>
</dbReference>
<dbReference type="PANTHER" id="PTHR35799:SF1">
    <property type="entry name" value="S-RIBOSYLHOMOCYSTEINE LYASE"/>
    <property type="match status" value="1"/>
</dbReference>
<dbReference type="Pfam" id="PF02664">
    <property type="entry name" value="LuxS"/>
    <property type="match status" value="1"/>
</dbReference>
<dbReference type="PIRSF" id="PIRSF006160">
    <property type="entry name" value="AI2"/>
    <property type="match status" value="1"/>
</dbReference>
<dbReference type="PRINTS" id="PR01487">
    <property type="entry name" value="LUXSPROTEIN"/>
</dbReference>
<dbReference type="SUPFAM" id="SSF63411">
    <property type="entry name" value="LuxS/MPP-like metallohydrolase"/>
    <property type="match status" value="1"/>
</dbReference>
<comment type="function">
    <text evidence="1">Involved in the synthesis of autoinducer 2 (AI-2) which is secreted by bacteria and is used to communicate both the cell density and the metabolic potential of the environment. The regulation of gene expression in response to changes in cell density is called quorum sensing. Catalyzes the transformation of S-ribosylhomocysteine (RHC) to homocysteine (HC) and 4,5-dihydroxy-2,3-pentadione (DPD).</text>
</comment>
<comment type="catalytic activity">
    <reaction evidence="1">
        <text>S-(5-deoxy-D-ribos-5-yl)-L-homocysteine = (S)-4,5-dihydroxypentane-2,3-dione + L-homocysteine</text>
        <dbReference type="Rhea" id="RHEA:17753"/>
        <dbReference type="ChEBI" id="CHEBI:29484"/>
        <dbReference type="ChEBI" id="CHEBI:58195"/>
        <dbReference type="ChEBI" id="CHEBI:58199"/>
        <dbReference type="EC" id="4.4.1.21"/>
    </reaction>
</comment>
<comment type="cofactor">
    <cofactor evidence="1">
        <name>Fe cation</name>
        <dbReference type="ChEBI" id="CHEBI:24875"/>
    </cofactor>
    <text evidence="1">Binds 1 Fe cation per subunit.</text>
</comment>
<comment type="subunit">
    <text evidence="1">Homodimer.</text>
</comment>
<comment type="similarity">
    <text evidence="1">Belongs to the LuxS family.</text>
</comment>
<evidence type="ECO:0000255" key="1">
    <source>
        <dbReference type="HAMAP-Rule" id="MF_00091"/>
    </source>
</evidence>
<keyword id="KW-0071">Autoinducer synthesis</keyword>
<keyword id="KW-0408">Iron</keyword>
<keyword id="KW-0456">Lyase</keyword>
<keyword id="KW-0479">Metal-binding</keyword>
<keyword id="KW-0673">Quorum sensing</keyword>
<protein>
    <recommendedName>
        <fullName evidence="1">S-ribosylhomocysteine lyase</fullName>
        <ecNumber evidence="1">4.4.1.21</ecNumber>
    </recommendedName>
    <alternativeName>
        <fullName evidence="1">AI-2 synthesis protein</fullName>
    </alternativeName>
    <alternativeName>
        <fullName evidence="1">Autoinducer-2 production protein LuxS</fullName>
    </alternativeName>
</protein>
<name>LUXS_BACMK</name>
<feature type="chain" id="PRO_1000093301" description="S-ribosylhomocysteine lyase">
    <location>
        <begin position="1"/>
        <end position="157"/>
    </location>
</feature>
<feature type="binding site" evidence="1">
    <location>
        <position position="54"/>
    </location>
    <ligand>
        <name>Fe cation</name>
        <dbReference type="ChEBI" id="CHEBI:24875"/>
    </ligand>
</feature>
<feature type="binding site" evidence="1">
    <location>
        <position position="58"/>
    </location>
    <ligand>
        <name>Fe cation</name>
        <dbReference type="ChEBI" id="CHEBI:24875"/>
    </ligand>
</feature>
<feature type="binding site" evidence="1">
    <location>
        <position position="126"/>
    </location>
    <ligand>
        <name>Fe cation</name>
        <dbReference type="ChEBI" id="CHEBI:24875"/>
    </ligand>
</feature>
<proteinExistence type="inferred from homology"/>
<sequence length="157" mass="17855">MPSVESFELDHTIVKAPYVRHCGVHNVGSDGIVNKFDIRFCQPNKQAMKPDVIHTLEHLLAFNLRKYIDRYPHFDIIDISPMGCQTGYYLVVSGTPTVREIIDLLELTLKDAVQITEIPAANETQCGQAKLHDLEGAQRLMNFWLSQDKDELEKVFG</sequence>
<gene>
    <name evidence="1" type="primary">luxS</name>
    <name type="ordered locus">BcerKBAB4_4626</name>
</gene>
<accession>A9VLF6</accession>
<reference key="1">
    <citation type="journal article" date="2008" name="Chem. Biol. Interact.">
        <title>Extending the Bacillus cereus group genomics to putative food-borne pathogens of different toxicity.</title>
        <authorList>
            <person name="Lapidus A."/>
            <person name="Goltsman E."/>
            <person name="Auger S."/>
            <person name="Galleron N."/>
            <person name="Segurens B."/>
            <person name="Dossat C."/>
            <person name="Land M.L."/>
            <person name="Broussolle V."/>
            <person name="Brillard J."/>
            <person name="Guinebretiere M.-H."/>
            <person name="Sanchis V."/>
            <person name="Nguen-the C."/>
            <person name="Lereclus D."/>
            <person name="Richardson P."/>
            <person name="Wincker P."/>
            <person name="Weissenbach J."/>
            <person name="Ehrlich S.D."/>
            <person name="Sorokin A."/>
        </authorList>
    </citation>
    <scope>NUCLEOTIDE SEQUENCE [LARGE SCALE GENOMIC DNA]</scope>
    <source>
        <strain>KBAB4</strain>
    </source>
</reference>
<organism>
    <name type="scientific">Bacillus mycoides (strain KBAB4)</name>
    <name type="common">Bacillus weihenstephanensis</name>
    <dbReference type="NCBI Taxonomy" id="315730"/>
    <lineage>
        <taxon>Bacteria</taxon>
        <taxon>Bacillati</taxon>
        <taxon>Bacillota</taxon>
        <taxon>Bacilli</taxon>
        <taxon>Bacillales</taxon>
        <taxon>Bacillaceae</taxon>
        <taxon>Bacillus</taxon>
        <taxon>Bacillus cereus group</taxon>
    </lineage>
</organism>